<sequence length="927" mass="103354">MPSSTASSEDAPITSTAWMNWKDVFLKCVQPMLAVVLLLRFSSIVDEAGFTTTIILVFFTFLVSLVTGWSACTVVSRKSSEVGFVKTMLAYSSTEFAISFSIIYLFCLLVATSTFLTSAAEAVLHIFSTFSLELLDGATHDLRLVSSVLSLITLALCMVRNRNARFVRTFIFALTCIAIALQLSSVMFRYGEYQLRRVSDRNAMIPSPPNEEISTIFAQLFPAAMCGLTILNIGSKLQNTAPRGALIAIAVSACFYGAAAMLDYVEFFARTSTSNSTGSAEYNEFLSYIYTTVPMAIVITLACVLSAVSTLKYAAVILQSLGRSNQCRCILWLAKGFGERDIPIRCLLLLSTVQILVSAIGSYDILCIPTTVFYLFAYALFNFYVFLVKLSDPEIPSPPTLLSLAISAACFIASLYTNRHLALFIASIFAISYCSLLYIIRRERNEDGEECPKSMYSSVLEQMHELQQEPDSRRHFHPQILLLSGSPAARPGLVDFAHSITRGKSLLICGYIIPKISNKVEQPMTWTEYLMQQSPCSRSYLLQLKIDKQINDWLRAREVNAFGAAICCTKQAEGANILLQTAGLGRLRPNILMLGYKTGWEKLSKESISEYYGMLSNAFDKQVGVIIFRNEASGFDVTSSIRKNGAPINDDEDLAEYVDSATPKLADQGSQKKDVPRGKLLNTFRKMSMAVNKDLESGGRRSTSSSTRFQVIDKHSISEPDQKIIMAQMFRFRKRIPNARIDVFWLREAGGLTMLAPYLLTQAGSFLEGAHIRVFTKTDGKDNKRINEEQKNMAAILRKFHIDSSDLHILPEFSKPPCKQTYDEFRAKIDKYKVETSSSGEPVDGSFDNNQIFNLREKTRSFLRASELIREHSSDADLIVCTLPSARPEIPSPIYLGWIDMLSRQTPPTCLVRGNQVSMSALRLKFP</sequence>
<gene>
    <name evidence="5" type="ORF">B0303.11</name>
</gene>
<protein>
    <recommendedName>
        <fullName evidence="3">Solute carrier family 12 protein B0303.11</fullName>
    </recommendedName>
</protein>
<proteinExistence type="inferred from homology"/>
<name>YKAA_CAEEL</name>
<feature type="chain" id="PRO_0000054181" description="Solute carrier family 12 protein B0303.11">
    <location>
        <begin position="1"/>
        <end position="927"/>
    </location>
</feature>
<feature type="topological domain" description="Cytoplasmic" evidence="3">
    <location>
        <begin position="1"/>
        <end position="23"/>
    </location>
</feature>
<feature type="transmembrane region" description="Helical; Name=1" evidence="1">
    <location>
        <begin position="24"/>
        <end position="44"/>
    </location>
</feature>
<feature type="topological domain" description="Extracellular" evidence="3">
    <location>
        <begin position="45"/>
        <end position="53"/>
    </location>
</feature>
<feature type="transmembrane region" description="Helical; Name=2" evidence="1">
    <location>
        <begin position="54"/>
        <end position="74"/>
    </location>
</feature>
<feature type="topological domain" description="Cytoplasmic" evidence="3">
    <location>
        <begin position="75"/>
        <end position="95"/>
    </location>
</feature>
<feature type="transmembrane region" description="Helical; Name=3" evidence="1">
    <location>
        <begin position="96"/>
        <end position="116"/>
    </location>
</feature>
<feature type="topological domain" description="Extracellular" evidence="3">
    <location>
        <begin position="117"/>
        <end position="141"/>
    </location>
</feature>
<feature type="transmembrane region" description="Helical; Name=4" evidence="1">
    <location>
        <begin position="142"/>
        <end position="159"/>
    </location>
</feature>
<feature type="topological domain" description="Cytoplasmic" evidence="3">
    <location>
        <begin position="160"/>
        <end position="165"/>
    </location>
</feature>
<feature type="transmembrane region" description="Helical; Name=5" evidence="1">
    <location>
        <begin position="166"/>
        <end position="186"/>
    </location>
</feature>
<feature type="topological domain" description="Extracellular" evidence="3">
    <location>
        <begin position="187"/>
        <end position="212"/>
    </location>
</feature>
<feature type="transmembrane region" description="Helical; Name=6" evidence="1">
    <location>
        <begin position="213"/>
        <end position="233"/>
    </location>
</feature>
<feature type="topological domain" description="Cytoplasmic" evidence="3">
    <location>
        <begin position="234"/>
        <end position="244"/>
    </location>
</feature>
<feature type="transmembrane region" description="Helical; Name=7" evidence="1">
    <location>
        <begin position="245"/>
        <end position="265"/>
    </location>
</feature>
<feature type="topological domain" description="Extracellular" evidence="3">
    <location>
        <begin position="266"/>
        <end position="284"/>
    </location>
</feature>
<feature type="transmembrane region" description="Helical; Name=8" evidence="1">
    <location>
        <begin position="285"/>
        <end position="305"/>
    </location>
</feature>
<feature type="topological domain" description="Cytoplasmic" evidence="3">
    <location>
        <begin position="306"/>
        <end position="345"/>
    </location>
</feature>
<feature type="transmembrane region" description="Helical; Name=9" evidence="1">
    <location>
        <begin position="346"/>
        <end position="366"/>
    </location>
</feature>
<feature type="topological domain" description="Extracellular" evidence="3">
    <location>
        <position position="367"/>
    </location>
</feature>
<feature type="transmembrane region" description="Helical; Name=10" evidence="1">
    <location>
        <begin position="368"/>
        <end position="388"/>
    </location>
</feature>
<feature type="topological domain" description="Cytoplasmic" evidence="3">
    <location>
        <begin position="389"/>
        <end position="394"/>
    </location>
</feature>
<feature type="transmembrane region" description="Helical; Name=11" evidence="1">
    <location>
        <begin position="395"/>
        <end position="415"/>
    </location>
</feature>
<feature type="topological domain" description="Extracellular" evidence="3">
    <location>
        <begin position="416"/>
        <end position="419"/>
    </location>
</feature>
<feature type="transmembrane region" description="Helical; Name=12" evidence="1">
    <location>
        <begin position="420"/>
        <end position="440"/>
    </location>
</feature>
<feature type="topological domain" description="Cytoplasmic" evidence="3">
    <location>
        <begin position="441"/>
        <end position="927"/>
    </location>
</feature>
<feature type="glycosylation site" description="N-linked (GlcNAc...) asparagine" evidence="2">
    <location>
        <position position="275"/>
    </location>
</feature>
<feature type="splice variant" id="VSP_060749" description="In isoform a." evidence="3">
    <location>
        <begin position="515"/>
        <end position="532"/>
    </location>
</feature>
<keyword id="KW-0025">Alternative splicing</keyword>
<keyword id="KW-1003">Cell membrane</keyword>
<keyword id="KW-0325">Glycoprotein</keyword>
<keyword id="KW-0472">Membrane</keyword>
<keyword id="KW-1185">Reference proteome</keyword>
<keyword id="KW-0812">Transmembrane</keyword>
<keyword id="KW-1133">Transmembrane helix</keyword>
<organism>
    <name type="scientific">Caenorhabditis elegans</name>
    <dbReference type="NCBI Taxonomy" id="6239"/>
    <lineage>
        <taxon>Eukaryota</taxon>
        <taxon>Metazoa</taxon>
        <taxon>Ecdysozoa</taxon>
        <taxon>Nematoda</taxon>
        <taxon>Chromadorea</taxon>
        <taxon>Rhabditida</taxon>
        <taxon>Rhabditina</taxon>
        <taxon>Rhabditomorpha</taxon>
        <taxon>Rhabditoidea</taxon>
        <taxon>Rhabditidae</taxon>
        <taxon>Peloderinae</taxon>
        <taxon>Caenorhabditis</taxon>
    </lineage>
</organism>
<accession>P34261</accession>
<accession>A0A0K3AR76</accession>
<accession>A0A0K3AU37</accession>
<accession>P34262</accession>
<dbReference type="EMBL" id="BX284603">
    <property type="protein sequence ID" value="CTQ86554.1"/>
    <property type="molecule type" value="Genomic_DNA"/>
</dbReference>
<dbReference type="EMBL" id="BX284603">
    <property type="protein sequence ID" value="CTQ86555.1"/>
    <property type="molecule type" value="Genomic_DNA"/>
</dbReference>
<dbReference type="PIR" id="A88537">
    <property type="entry name" value="A88537"/>
</dbReference>
<dbReference type="PIR" id="S27792">
    <property type="entry name" value="S27792"/>
</dbReference>
<dbReference type="RefSeq" id="NP_001299854.1">
    <property type="nucleotide sequence ID" value="NM_001312925.1"/>
</dbReference>
<dbReference type="RefSeq" id="NP_001299855.1">
    <molecule id="P34261-1"/>
    <property type="nucleotide sequence ID" value="NM_001312926.3"/>
</dbReference>
<dbReference type="RefSeq" id="NP_001380181.1">
    <molecule id="P34261-2"/>
    <property type="nucleotide sequence ID" value="NM_001392160.1"/>
</dbReference>
<dbReference type="SMR" id="P34261"/>
<dbReference type="FunCoup" id="P34261">
    <property type="interactions" value="1568"/>
</dbReference>
<dbReference type="STRING" id="6239.B0303.11b.2"/>
<dbReference type="PaxDb" id="6239-B0303.11"/>
<dbReference type="PeptideAtlas" id="P34261"/>
<dbReference type="EnsemblMetazoa" id="B0303.11a.1">
    <molecule id="P34261-2"/>
    <property type="protein sequence ID" value="B0303.11a.1"/>
    <property type="gene ID" value="WBGene00015131"/>
</dbReference>
<dbReference type="EnsemblMetazoa" id="B0303.11a.2">
    <molecule id="P34261-2"/>
    <property type="protein sequence ID" value="B0303.11a.2"/>
    <property type="gene ID" value="WBGene00015131"/>
</dbReference>
<dbReference type="EnsemblMetazoa" id="B0303.11b.1">
    <molecule id="P34261-1"/>
    <property type="protein sequence ID" value="B0303.11b.1"/>
    <property type="gene ID" value="WBGene00015131"/>
</dbReference>
<dbReference type="GeneID" id="176222"/>
<dbReference type="KEGG" id="cel:CELE_B0303.11"/>
<dbReference type="AGR" id="WB:WBGene00015131"/>
<dbReference type="CTD" id="176222"/>
<dbReference type="WormBase" id="B0303.11a">
    <molecule id="P34261-2"/>
    <property type="protein sequence ID" value="CE50287"/>
    <property type="gene ID" value="WBGene00015131"/>
</dbReference>
<dbReference type="WormBase" id="B0303.11b">
    <molecule id="P34261-1"/>
    <property type="protein sequence ID" value="CE50231"/>
    <property type="gene ID" value="WBGene00015131"/>
</dbReference>
<dbReference type="eggNOG" id="KOG2083">
    <property type="taxonomic scope" value="Eukaryota"/>
</dbReference>
<dbReference type="HOGENOM" id="CLU_001883_0_0_1"/>
<dbReference type="InParanoid" id="P34261"/>
<dbReference type="OMA" id="EQMHELQ"/>
<dbReference type="OrthoDB" id="2020542at2759"/>
<dbReference type="PhylomeDB" id="P34261"/>
<dbReference type="Reactome" id="R-CEL-426117">
    <property type="pathway name" value="Cation-coupled Chloride cotransporters"/>
</dbReference>
<dbReference type="PRO" id="PR:P34261"/>
<dbReference type="Proteomes" id="UP000001940">
    <property type="component" value="Chromosome III"/>
</dbReference>
<dbReference type="Bgee" id="WBGene00015131">
    <property type="expression patterns" value="Expressed in larva and 2 other cell types or tissues"/>
</dbReference>
<dbReference type="GO" id="GO:0005886">
    <property type="term" value="C:plasma membrane"/>
    <property type="evidence" value="ECO:0007669"/>
    <property type="project" value="UniProtKB-SubCell"/>
</dbReference>
<dbReference type="GO" id="GO:0008511">
    <property type="term" value="F:sodium:potassium:chloride symporter activity"/>
    <property type="evidence" value="ECO:0000318"/>
    <property type="project" value="GO_Central"/>
</dbReference>
<dbReference type="GO" id="GO:0006884">
    <property type="term" value="P:cell volume homeostasis"/>
    <property type="evidence" value="ECO:0000318"/>
    <property type="project" value="GO_Central"/>
</dbReference>
<dbReference type="GO" id="GO:0055064">
    <property type="term" value="P:chloride ion homeostasis"/>
    <property type="evidence" value="ECO:0000318"/>
    <property type="project" value="GO_Central"/>
</dbReference>
<dbReference type="GO" id="GO:1902476">
    <property type="term" value="P:chloride transmembrane transport"/>
    <property type="evidence" value="ECO:0000318"/>
    <property type="project" value="GO_Central"/>
</dbReference>
<dbReference type="GO" id="GO:0055075">
    <property type="term" value="P:potassium ion homeostasis"/>
    <property type="evidence" value="ECO:0000318"/>
    <property type="project" value="GO_Central"/>
</dbReference>
<dbReference type="GO" id="GO:1990573">
    <property type="term" value="P:potassium ion import across plasma membrane"/>
    <property type="evidence" value="ECO:0000318"/>
    <property type="project" value="GO_Central"/>
</dbReference>
<dbReference type="GO" id="GO:0055078">
    <property type="term" value="P:sodium ion homeostasis"/>
    <property type="evidence" value="ECO:0000318"/>
    <property type="project" value="GO_Central"/>
</dbReference>
<dbReference type="GO" id="GO:0035725">
    <property type="term" value="P:sodium ion transmembrane transport"/>
    <property type="evidence" value="ECO:0000318"/>
    <property type="project" value="GO_Central"/>
</dbReference>
<dbReference type="Gene3D" id="1.20.1740.10">
    <property type="entry name" value="Amino acid/polyamine transporter I"/>
    <property type="match status" value="1"/>
</dbReference>
<dbReference type="InterPro" id="IPR018491">
    <property type="entry name" value="SLC12_C"/>
</dbReference>
<dbReference type="InterPro" id="IPR004842">
    <property type="entry name" value="SLC12A_fam"/>
</dbReference>
<dbReference type="PANTHER" id="PTHR11827:SF7">
    <property type="entry name" value="SOLUTE CARRIER FAMILY 12 PROTEIN B0303.11"/>
    <property type="match status" value="1"/>
</dbReference>
<dbReference type="PANTHER" id="PTHR11827">
    <property type="entry name" value="SOLUTE CARRIER FAMILY 12, CATION COTRANSPORTERS"/>
    <property type="match status" value="1"/>
</dbReference>
<dbReference type="Pfam" id="PF03522">
    <property type="entry name" value="SLC12"/>
    <property type="match status" value="1"/>
</dbReference>
<comment type="subcellular location">
    <subcellularLocation>
        <location evidence="3">Cell membrane</location>
        <topology evidence="1">Multi-pass membrane protein</topology>
    </subcellularLocation>
</comment>
<comment type="alternative products">
    <event type="alternative splicing"/>
    <isoform>
        <id>P34261-1</id>
        <name evidence="5">b</name>
        <sequence type="displayed"/>
    </isoform>
    <isoform>
        <id>P34261-2</id>
        <name evidence="4">a</name>
        <sequence type="described" ref="VSP_060749"/>
    </isoform>
</comment>
<comment type="similarity">
    <text evidence="3">Belongs to the SLC12A transporter family.</text>
</comment>
<reference key="1">
    <citation type="journal article" date="1992" name="Nature">
        <title>The C. elegans genome sequencing project: a beginning.</title>
        <authorList>
            <person name="Sulston J."/>
            <person name="Du Z."/>
            <person name="Thomas K."/>
            <person name="Wilson R."/>
            <person name="Hillier L."/>
            <person name="Staden R."/>
            <person name="Halloran N."/>
            <person name="Green P."/>
            <person name="Thierry-Mieg J."/>
            <person name="Qiu L."/>
            <person name="Dear S."/>
            <person name="Coulson A."/>
            <person name="Craxton M."/>
            <person name="Durbin R."/>
            <person name="Berks M."/>
            <person name="Metzstein M."/>
            <person name="Hawkins T."/>
            <person name="Ainscough R."/>
            <person name="Waterston R."/>
        </authorList>
    </citation>
    <scope>NUCLEOTIDE SEQUENCE [LARGE SCALE GENOMIC DNA]</scope>
    <source>
        <strain>Bristol N2</strain>
    </source>
</reference>
<reference key="2">
    <citation type="journal article" date="1998" name="Science">
        <title>Genome sequence of the nematode C. elegans: a platform for investigating biology.</title>
        <authorList>
            <consortium name="The C. elegans sequencing consortium"/>
        </authorList>
    </citation>
    <scope>NUCLEOTIDE SEQUENCE [LARGE SCALE GENOMIC DNA]</scope>
    <source>
        <strain>Bristol N2</strain>
    </source>
</reference>
<evidence type="ECO:0000255" key="1"/>
<evidence type="ECO:0000255" key="2">
    <source>
        <dbReference type="PROSITE-ProRule" id="PRU00498"/>
    </source>
</evidence>
<evidence type="ECO:0000305" key="3"/>
<evidence type="ECO:0000312" key="4">
    <source>
        <dbReference type="WormBase" id="B0303.11a"/>
    </source>
</evidence>
<evidence type="ECO:0000312" key="5">
    <source>
        <dbReference type="WormBase" id="B0303.11b"/>
    </source>
</evidence>